<accession>C5YRU8</accession>
<comment type="subunit">
    <text evidence="1">Homodimer and heterodimers.</text>
</comment>
<comment type="subcellular location">
    <subcellularLocation>
        <location evidence="1">Cell membrane</location>
        <topology evidence="1">Multi-pass membrane protein</topology>
    </subcellularLocation>
</comment>
<comment type="similarity">
    <text evidence="4">Belongs to the Casparian strip membrane proteins (CASP) family.</text>
</comment>
<reference key="1">
    <citation type="journal article" date="2009" name="Nature">
        <title>The Sorghum bicolor genome and the diversification of grasses.</title>
        <authorList>
            <person name="Paterson A.H."/>
            <person name="Bowers J.E."/>
            <person name="Bruggmann R."/>
            <person name="Dubchak I."/>
            <person name="Grimwood J."/>
            <person name="Gundlach H."/>
            <person name="Haberer G."/>
            <person name="Hellsten U."/>
            <person name="Mitros T."/>
            <person name="Poliakov A."/>
            <person name="Schmutz J."/>
            <person name="Spannagl M."/>
            <person name="Tang H."/>
            <person name="Wang X."/>
            <person name="Wicker T."/>
            <person name="Bharti A.K."/>
            <person name="Chapman J."/>
            <person name="Feltus F.A."/>
            <person name="Gowik U."/>
            <person name="Grigoriev I.V."/>
            <person name="Lyons E."/>
            <person name="Maher C.A."/>
            <person name="Martis M."/>
            <person name="Narechania A."/>
            <person name="Otillar R.P."/>
            <person name="Penning B.W."/>
            <person name="Salamov A.A."/>
            <person name="Wang Y."/>
            <person name="Zhang L."/>
            <person name="Carpita N.C."/>
            <person name="Freeling M."/>
            <person name="Gingle A.R."/>
            <person name="Hash C.T."/>
            <person name="Keller B."/>
            <person name="Klein P."/>
            <person name="Kresovich S."/>
            <person name="McCann M.C."/>
            <person name="Ming R."/>
            <person name="Peterson D.G."/>
            <person name="Mehboob-ur-Rahman M."/>
            <person name="Ware D."/>
            <person name="Westhoff P."/>
            <person name="Mayer K.F.X."/>
            <person name="Messing J."/>
            <person name="Rokhsar D.S."/>
        </authorList>
    </citation>
    <scope>NUCLEOTIDE SEQUENCE [LARGE SCALE GENOMIC DNA]</scope>
    <source>
        <strain>cv. BTx623</strain>
    </source>
</reference>
<reference key="2">
    <citation type="journal article" date="2018" name="Plant J.">
        <title>The Sorghum bicolor reference genome: improved assembly, gene annotations, a transcriptome atlas, and signatures of genome organization.</title>
        <authorList>
            <person name="McCormick R.F."/>
            <person name="Truong S.K."/>
            <person name="Sreedasyam A."/>
            <person name="Jenkins J."/>
            <person name="Shu S."/>
            <person name="Sims D."/>
            <person name="Kennedy M."/>
            <person name="Amirebrahimi M."/>
            <person name="Weers B.D."/>
            <person name="McKinley B."/>
            <person name="Mattison A."/>
            <person name="Morishige D.T."/>
            <person name="Grimwood J."/>
            <person name="Schmutz J."/>
            <person name="Mullet J.E."/>
        </authorList>
    </citation>
    <scope>GENOME REANNOTATION</scope>
    <source>
        <strain>cv. BTx623</strain>
    </source>
</reference>
<reference key="3">
    <citation type="journal article" date="2014" name="Plant Physiol.">
        <title>Functional and evolutionary analysis of the CASPARIAN STRIP MEMBRANE DOMAIN PROTEIN family.</title>
        <authorList>
            <person name="Roppolo D."/>
            <person name="Boeckmann B."/>
            <person name="Pfister A."/>
            <person name="Boutet E."/>
            <person name="Rubio M.C."/>
            <person name="Denervaud-Tendon V."/>
            <person name="Vermeer J.E."/>
            <person name="Gheyselinck J."/>
            <person name="Xenarios I."/>
            <person name="Geldner N."/>
        </authorList>
    </citation>
    <scope>GENE FAMILY</scope>
    <scope>NOMENCLATURE</scope>
</reference>
<protein>
    <recommendedName>
        <fullName>CASP-like protein 1B1</fullName>
        <shortName>SbCASPL1B1</shortName>
    </recommendedName>
</protein>
<dbReference type="EMBL" id="CM000767">
    <property type="protein sequence ID" value="EES17365.1"/>
    <property type="molecule type" value="Genomic_DNA"/>
</dbReference>
<dbReference type="RefSeq" id="XP_002443527.1">
    <property type="nucleotide sequence ID" value="XM_002443482.1"/>
</dbReference>
<dbReference type="SMR" id="C5YRU8"/>
<dbReference type="FunCoup" id="C5YRU8">
    <property type="interactions" value="686"/>
</dbReference>
<dbReference type="STRING" id="4558.C5YRU8"/>
<dbReference type="EnsemblPlants" id="EES17365">
    <property type="protein sequence ID" value="EES17365"/>
    <property type="gene ID" value="SORBI_3008G164900"/>
</dbReference>
<dbReference type="Gramene" id="EES17365">
    <property type="protein sequence ID" value="EES17365"/>
    <property type="gene ID" value="SORBI_3008G164900"/>
</dbReference>
<dbReference type="KEGG" id="sbi:8070143"/>
<dbReference type="eggNOG" id="ENOG502RYH6">
    <property type="taxonomic scope" value="Eukaryota"/>
</dbReference>
<dbReference type="HOGENOM" id="CLU_066104_1_0_1"/>
<dbReference type="InParanoid" id="C5YRU8"/>
<dbReference type="OMA" id="HNLVMIA"/>
<dbReference type="OrthoDB" id="610574at2759"/>
<dbReference type="Proteomes" id="UP000000768">
    <property type="component" value="Chromosome 8"/>
</dbReference>
<dbReference type="GO" id="GO:0005886">
    <property type="term" value="C:plasma membrane"/>
    <property type="evidence" value="ECO:0000318"/>
    <property type="project" value="GO_Central"/>
</dbReference>
<dbReference type="InterPro" id="IPR006459">
    <property type="entry name" value="CASP/CASPL"/>
</dbReference>
<dbReference type="InterPro" id="IPR006702">
    <property type="entry name" value="CASP_dom"/>
</dbReference>
<dbReference type="InterPro" id="IPR044173">
    <property type="entry name" value="CASPL"/>
</dbReference>
<dbReference type="NCBIfam" id="TIGR01569">
    <property type="entry name" value="A_tha_TIGR01569"/>
    <property type="match status" value="1"/>
</dbReference>
<dbReference type="PANTHER" id="PTHR36488">
    <property type="entry name" value="CASP-LIKE PROTEIN 1U1"/>
    <property type="match status" value="1"/>
</dbReference>
<dbReference type="PANTHER" id="PTHR36488:SF8">
    <property type="entry name" value="CASP-LIKE PROTEIN 1U1"/>
    <property type="match status" value="1"/>
</dbReference>
<dbReference type="Pfam" id="PF04535">
    <property type="entry name" value="CASP_dom"/>
    <property type="match status" value="1"/>
</dbReference>
<organism>
    <name type="scientific">Sorghum bicolor</name>
    <name type="common">Sorghum</name>
    <name type="synonym">Sorghum vulgare</name>
    <dbReference type="NCBI Taxonomy" id="4558"/>
    <lineage>
        <taxon>Eukaryota</taxon>
        <taxon>Viridiplantae</taxon>
        <taxon>Streptophyta</taxon>
        <taxon>Embryophyta</taxon>
        <taxon>Tracheophyta</taxon>
        <taxon>Spermatophyta</taxon>
        <taxon>Magnoliopsida</taxon>
        <taxon>Liliopsida</taxon>
        <taxon>Poales</taxon>
        <taxon>Poaceae</taxon>
        <taxon>PACMAD clade</taxon>
        <taxon>Panicoideae</taxon>
        <taxon>Andropogonodae</taxon>
        <taxon>Andropogoneae</taxon>
        <taxon>Sorghinae</taxon>
        <taxon>Sorghum</taxon>
    </lineage>
</organism>
<keyword id="KW-1003">Cell membrane</keyword>
<keyword id="KW-0472">Membrane</keyword>
<keyword id="KW-1185">Reference proteome</keyword>
<keyword id="KW-0812">Transmembrane</keyword>
<keyword id="KW-1133">Transmembrane helix</keyword>
<gene>
    <name type="ordered locus">Sb08g021090</name>
</gene>
<sequence length="211" mass="22113">MDLERGSKTPPSSAPAAAAATTTTSTCCSNKRPQLRDRLVALQPVVLRAAATLATAVAAAVMALNAQSYTAVVAIVGTRPLTQTFTTKFRDTPAFVYFVIANAIAAVYNLVMLLFRCLILRRRMAGLVVHMLDMVIMALLATGAATAAAMAELGKNGNVHARWNPICDRFGSFCSRGGVALASSFTGVALMLALNLLSAASNAQCSPGQYE</sequence>
<name>CSPLK_SORBI</name>
<feature type="chain" id="PRO_0000391590" description="CASP-like protein 1B1">
    <location>
        <begin position="1"/>
        <end position="211"/>
    </location>
</feature>
<feature type="topological domain" description="Cytoplasmic" evidence="2">
    <location>
        <begin position="1"/>
        <end position="55"/>
    </location>
</feature>
<feature type="transmembrane region" description="Helical" evidence="2">
    <location>
        <begin position="56"/>
        <end position="76"/>
    </location>
</feature>
<feature type="topological domain" description="Extracellular" evidence="2">
    <location>
        <begin position="77"/>
        <end position="94"/>
    </location>
</feature>
<feature type="transmembrane region" description="Helical" evidence="2">
    <location>
        <begin position="95"/>
        <end position="115"/>
    </location>
</feature>
<feature type="topological domain" description="Cytoplasmic" evidence="2">
    <location>
        <begin position="116"/>
        <end position="123"/>
    </location>
</feature>
<feature type="transmembrane region" description="Helical" evidence="2">
    <location>
        <begin position="124"/>
        <end position="144"/>
    </location>
</feature>
<feature type="topological domain" description="Extracellular" evidence="2">
    <location>
        <begin position="145"/>
        <end position="176"/>
    </location>
</feature>
<feature type="transmembrane region" description="Helical" evidence="2">
    <location>
        <begin position="177"/>
        <end position="197"/>
    </location>
</feature>
<feature type="topological domain" description="Cytoplasmic" evidence="2">
    <location>
        <begin position="198"/>
        <end position="211"/>
    </location>
</feature>
<feature type="region of interest" description="Disordered" evidence="3">
    <location>
        <begin position="1"/>
        <end position="29"/>
    </location>
</feature>
<feature type="compositionally biased region" description="Low complexity" evidence="3">
    <location>
        <begin position="9"/>
        <end position="26"/>
    </location>
</feature>
<evidence type="ECO:0000250" key="1"/>
<evidence type="ECO:0000255" key="2"/>
<evidence type="ECO:0000256" key="3">
    <source>
        <dbReference type="SAM" id="MobiDB-lite"/>
    </source>
</evidence>
<evidence type="ECO:0000305" key="4"/>
<proteinExistence type="evidence at transcript level"/>